<keyword id="KW-0002">3D-structure</keyword>
<keyword id="KW-0968">Cytoplasmic vesicle</keyword>
<keyword id="KW-0325">Glycoprotein</keyword>
<keyword id="KW-0472">Membrane</keyword>
<keyword id="KW-0532">Neurotransmitter transport</keyword>
<keyword id="KW-0597">Phosphoprotein</keyword>
<keyword id="KW-0675">Receptor</keyword>
<keyword id="KW-1185">Reference proteome</keyword>
<keyword id="KW-0770">Synapse</keyword>
<keyword id="KW-0812">Transmembrane</keyword>
<keyword id="KW-1133">Transmembrane helix</keyword>
<keyword id="KW-0813">Transport</keyword>
<accession>Q9Z2I6</accession>
<name>SV2C_RAT</name>
<feature type="chain" id="PRO_0000239773" description="Synaptic vesicle glycoprotein 2C">
    <location>
        <begin position="1"/>
        <end position="727"/>
    </location>
</feature>
<feature type="topological domain" description="Cytoplasmic" evidence="3">
    <location>
        <begin position="1"/>
        <end position="154"/>
    </location>
</feature>
<feature type="transmembrane region" description="Helical" evidence="3">
    <location>
        <begin position="155"/>
        <end position="175"/>
    </location>
</feature>
<feature type="topological domain" description="Extracellular" evidence="3">
    <location>
        <begin position="176"/>
        <end position="191"/>
    </location>
</feature>
<feature type="transmembrane region" description="Helical" evidence="3">
    <location>
        <begin position="192"/>
        <end position="212"/>
    </location>
</feature>
<feature type="topological domain" description="Cytoplasmic" evidence="3">
    <location>
        <begin position="213"/>
        <end position="226"/>
    </location>
</feature>
<feature type="transmembrane region" description="Helical" evidence="3">
    <location>
        <begin position="227"/>
        <end position="247"/>
    </location>
</feature>
<feature type="topological domain" description="Extracellular" evidence="3">
    <location>
        <position position="248"/>
    </location>
</feature>
<feature type="transmembrane region" description="Helical" evidence="3">
    <location>
        <begin position="249"/>
        <end position="269"/>
    </location>
</feature>
<feature type="topological domain" description="Cytoplasmic" evidence="3">
    <location>
        <begin position="270"/>
        <end position="280"/>
    </location>
</feature>
<feature type="transmembrane region" description="Helical" evidence="3">
    <location>
        <begin position="281"/>
        <end position="301"/>
    </location>
</feature>
<feature type="topological domain" description="Extracellular" evidence="3">
    <location>
        <begin position="302"/>
        <end position="320"/>
    </location>
</feature>
<feature type="transmembrane region" description="Helical" evidence="3">
    <location>
        <begin position="321"/>
        <end position="341"/>
    </location>
</feature>
<feature type="topological domain" description="Cytoplasmic" evidence="3">
    <location>
        <begin position="342"/>
        <end position="437"/>
    </location>
</feature>
<feature type="transmembrane region" description="Helical" evidence="3">
    <location>
        <begin position="438"/>
        <end position="458"/>
    </location>
</feature>
<feature type="topological domain" description="Extracellular" evidence="3 15">
    <location>
        <begin position="459"/>
        <end position="578"/>
    </location>
</feature>
<feature type="transmembrane region" description="Helical" evidence="3">
    <location>
        <begin position="579"/>
        <end position="599"/>
    </location>
</feature>
<feature type="topological domain" description="Cytoplasmic" evidence="3">
    <location>
        <begin position="600"/>
        <end position="609"/>
    </location>
</feature>
<feature type="transmembrane region" description="Helical" evidence="3">
    <location>
        <begin position="610"/>
        <end position="630"/>
    </location>
</feature>
<feature type="topological domain" description="Extracellular" evidence="3">
    <location>
        <begin position="631"/>
        <end position="636"/>
    </location>
</feature>
<feature type="transmembrane region" description="Helical" evidence="3">
    <location>
        <begin position="637"/>
        <end position="657"/>
    </location>
</feature>
<feature type="topological domain" description="Cytoplasmic" evidence="3">
    <location>
        <begin position="658"/>
        <end position="670"/>
    </location>
</feature>
<feature type="transmembrane region" description="Helical" evidence="3">
    <location>
        <begin position="671"/>
        <end position="693"/>
    </location>
</feature>
<feature type="topological domain" description="Extracellular" evidence="3">
    <location>
        <begin position="694"/>
        <end position="697"/>
    </location>
</feature>
<feature type="transmembrane region" description="Helical" evidence="3">
    <location>
        <begin position="698"/>
        <end position="716"/>
    </location>
</feature>
<feature type="topological domain" description="Cytoplasmic" evidence="3">
    <location>
        <begin position="717"/>
        <end position="727"/>
    </location>
</feature>
<feature type="region of interest" description="Interaction with SYT1" evidence="6">
    <location>
        <begin position="1"/>
        <end position="57"/>
    </location>
</feature>
<feature type="region of interest" description="Disordered" evidence="4">
    <location>
        <begin position="22"/>
        <end position="120"/>
    </location>
</feature>
<feature type="region of interest" description="(Microbial infection) C.botulinum neurotoxin type A-binding" evidence="8 12">
    <location>
        <begin position="529"/>
        <end position="566"/>
    </location>
</feature>
<feature type="modified residue" description="Phosphoserine" evidence="1">
    <location>
        <position position="75"/>
    </location>
</feature>
<feature type="modified residue" description="Phosphoserine" evidence="1">
    <location>
        <position position="76"/>
    </location>
</feature>
<feature type="modified residue" description="Phosphothreonine" evidence="1">
    <location>
        <position position="79"/>
    </location>
</feature>
<feature type="modified residue" description="Phosphotyrosine" evidence="2">
    <location>
        <position position="466"/>
    </location>
</feature>
<feature type="glycosylation site" description="N-linked (GlcNAc...) asparagine" evidence="3">
    <location>
        <position position="480"/>
    </location>
</feature>
<feature type="glycosylation site" description="N-linked (GlcNAc...) asparagine" evidence="3">
    <location>
        <position position="484"/>
    </location>
</feature>
<feature type="glycosylation site" description="N-linked (GlcNAc...) asparagine" evidence="3">
    <location>
        <position position="534"/>
    </location>
</feature>
<feature type="glycosylation site" description="N-linked (GlcNAc...) asparagine" evidence="17">
    <location>
        <position position="559"/>
    </location>
</feature>
<feature type="glycosylation site" description="N-linked (GlcNAc...) asparagine" evidence="3">
    <location>
        <position position="565"/>
    </location>
</feature>
<feature type="mutagenesis site" description="Loss of one glycosylation site. No effect on C.botulinum neurotoxin type A (BoNT/A, botA) binding, but reduces the uptake of BoNT/A." evidence="12">
    <original>N</original>
    <variation>A</variation>
    <location>
        <position position="559"/>
    </location>
</feature>
<feature type="strand" evidence="19">
    <location>
        <begin position="478"/>
        <end position="480"/>
    </location>
</feature>
<feature type="strand" evidence="19">
    <location>
        <begin position="488"/>
        <end position="494"/>
    </location>
</feature>
<feature type="strand" evidence="19">
    <location>
        <begin position="496"/>
        <end position="499"/>
    </location>
</feature>
<feature type="strand" evidence="19">
    <location>
        <begin position="501"/>
        <end position="504"/>
    </location>
</feature>
<feature type="strand" evidence="19">
    <location>
        <begin position="506"/>
        <end position="509"/>
    </location>
</feature>
<feature type="strand" evidence="19">
    <location>
        <begin position="511"/>
        <end position="514"/>
    </location>
</feature>
<feature type="strand" evidence="19">
    <location>
        <begin position="516"/>
        <end position="519"/>
    </location>
</feature>
<feature type="strand" evidence="19">
    <location>
        <begin position="521"/>
        <end position="524"/>
    </location>
</feature>
<feature type="strand" evidence="19">
    <location>
        <begin position="526"/>
        <end position="529"/>
    </location>
</feature>
<feature type="strand" evidence="19">
    <location>
        <begin position="531"/>
        <end position="534"/>
    </location>
</feature>
<feature type="strand" evidence="19">
    <location>
        <begin position="536"/>
        <end position="539"/>
    </location>
</feature>
<feature type="strand" evidence="19">
    <location>
        <begin position="541"/>
        <end position="545"/>
    </location>
</feature>
<feature type="helix" evidence="19">
    <location>
        <begin position="549"/>
        <end position="551"/>
    </location>
</feature>
<feature type="strand" evidence="19">
    <location>
        <begin position="552"/>
        <end position="554"/>
    </location>
</feature>
<feature type="strand" evidence="19">
    <location>
        <begin position="556"/>
        <end position="562"/>
    </location>
</feature>
<comment type="function">
    <text evidence="6 7">Plays a role in the control of regulated secretion in neural and endocrine cells, enhancing selectively low-frequency neurotransmission. Positively regulates vesicle fusion by maintaining the readily releasable pool of secretory vesicles.</text>
</comment>
<comment type="function">
    <text evidence="8 9 12">(Microbial infection) Receptor for C.botulinum neurotoxin type A (BoNT/A, botA); the toxin binds Sv2c via extracellular loop 4 (PubMed:16543415, PubMed:27294781). Restores uptake of BoNT/A in rat cells that are deleted for SV2 receptor (PubMed:16543415, PubMed:18815274).</text>
</comment>
<comment type="function">
    <text evidence="10 11">(Microbial infection) Possible receptor for C.botulinum neurotoxin type D (BoNT/D, botD); BoNT/D does not bind to extracellular loop 4 as do BoNT/A and BoNT/E (PubMed:21483489). Another group does not find a convincing interaction with SV2 (PubMed:21632541).</text>
</comment>
<comment type="function">
    <text evidence="9 16">(Microbial infection) Receptor for C.botulinum neurotoxin type F (BoNT/F); binding requires glycosylation of Asn-573 (PubMed:19476346, PubMed:19650874).</text>
</comment>
<comment type="subunit">
    <text evidence="6">Interacts with SYT1 in a calcium-dependent manner.</text>
</comment>
<comment type="subunit">
    <text evidence="8 9 10 12">(Microbial infection) Interacts with C.botulinum neurotoxin type A (BoNT/A, botA).</text>
</comment>
<comment type="subunit">
    <text evidence="9 16">(Microbial infection) Interacts with C.botulinum neurotoxin type F (BoNT/F) (PubMed:19650874). Interaction requires glycosylation of SV2 proteins (PubMed:19476346, PubMed:19650874).</text>
</comment>
<comment type="interaction">
    <interactant intactId="EBI-8178859">
        <id>Q9Z2I6</id>
    </interactant>
    <interactant intactId="EBI-8178893">
        <id>P0DPI0</id>
        <label>botA</label>
    </interactant>
    <organismsDiffer>true</organismsDiffer>
    <experiments>12</experiments>
</comment>
<comment type="subcellular location">
    <subcellularLocation>
        <location evidence="5 7">Cytoplasmic vesicle</location>
        <location evidence="5 7">Secretory vesicle</location>
        <location evidence="5 7">Synaptic vesicle membrane</location>
        <topology evidence="5 7">Multi-pass membrane protein</topology>
    </subcellularLocation>
    <text>Enriched in small synaptic vesicles and adrenal microsomes, not present in chromaffin granules. Associated with both insulin granules and synaptic-like microvesicles in insulin-secreting cells of the pancreas.</text>
</comment>
<comment type="tissue specificity">
    <text evidence="5 13">Expressed at high levels in very few brain areas including the striatum, midbrain and hindbrain, and in the olfactory bulb. Expressed at lower levels in cerebrum, hippocampus and cerebellum (at protein level). Mainly expressed in brain; also detected in lung, liver, kidney.</text>
</comment>
<comment type="PTM">
    <text evidence="5 12 13">N-glycosylated.</text>
</comment>
<comment type="similarity">
    <text evidence="14">Belongs to the major facilitator superfamily.</text>
</comment>
<comment type="caution">
    <text evidence="10 11">The use of this protein as a coreceptor for C.botulinum type D (BoNT/D, botD) is controversial. In double SV2A/SV2B knockout mice BoNT/D does not degrade its synaptobrevin target; introducing SV2A, SV2B or SV2C restores target cleavage (PubMed:21483489). However another group does not find a convincing interaction with SV2 (PubMed:21632541).</text>
</comment>
<gene>
    <name type="primary">Sv2c</name>
</gene>
<reference key="1">
    <citation type="journal article" date="1998" name="J. Neurosci.">
        <title>SVOP, an evolutionarily conserved synaptic vesicle protein, suggests novel transport functions of synaptic vesicles.</title>
        <authorList>
            <person name="Janz R."/>
            <person name="Hofmann K."/>
            <person name="Suedhof T.C."/>
        </authorList>
    </citation>
    <scope>NUCLEOTIDE SEQUENCE [MRNA]</scope>
    <scope>GLYCOSYLATION</scope>
    <scope>TISSUE SPECIFICITY</scope>
    <source>
        <tissue>Brain</tissue>
    </source>
</reference>
<reference key="2">
    <citation type="journal article" date="1999" name="Neuroscience">
        <title>SV2C is a synaptic vesicle protein with an unusually restricted localization: anatomy of a synaptic vesicle protein family.</title>
        <authorList>
            <person name="Janz R."/>
            <person name="Suedhof T.C."/>
        </authorList>
    </citation>
    <scope>GLYCOSYLATION</scope>
    <scope>TISSUE SPECIFICITY</scope>
    <scope>SUBCELLULAR LOCATION</scope>
</reference>
<reference key="3">
    <citation type="journal article" date="2005" name="J. Cell Sci.">
        <title>SV2A and SV2C are not vesicular Ca2+ transporters but control glucose-evoked granule recruitment.</title>
        <authorList>
            <person name="Iezzi M."/>
            <person name="Theander S."/>
            <person name="Janz R."/>
            <person name="Loze C."/>
            <person name="Wollheim C.B."/>
        </authorList>
    </citation>
    <scope>FUNCTION</scope>
    <scope>SUBCELLULAR LOCATION</scope>
</reference>
<reference key="4">
    <citation type="journal article" date="2005" name="Mol. Cell. Neurosci.">
        <title>SV2A and SV2C contain a unique synaptotagmin-binding site.</title>
        <authorList>
            <person name="Schivell A.E."/>
            <person name="Mochida S."/>
            <person name="Kensel-Hammes P."/>
            <person name="Custer K.L."/>
            <person name="Bajjalieh S.M."/>
        </authorList>
    </citation>
    <scope>FUNCTION</scope>
    <scope>INTERACTION WITH SYT1</scope>
</reference>
<reference key="5">
    <citation type="journal article" date="2006" name="Science">
        <title>SV2 is the protein receptor for botulinum neurotoxin A.</title>
        <authorList>
            <person name="Dong M."/>
            <person name="Yeh F."/>
            <person name="Tepp W.H."/>
            <person name="Dean C."/>
            <person name="Johnson E.A."/>
            <person name="Janz R."/>
            <person name="Chapman E.R."/>
        </authorList>
    </citation>
    <scope>FUNCTION AS BOTULINUM NEUROTOXIN TYPE A RECEPTOR (MICROBIAL INFECTION)</scope>
    <scope>SUBUNIT (MICROBIAL INFECTION)</scope>
    <scope>DOMAIN</scope>
</reference>
<reference key="6">
    <citation type="journal article" date="2008" name="Mol. Biol. Cell">
        <title>Glycosylated SV2A and SV2B mediate the entry of botulinum neurotoxin E into neurons.</title>
        <authorList>
            <person name="Dong M."/>
            <person name="Liu H."/>
            <person name="Tepp W.H."/>
            <person name="Johnson E.A."/>
            <person name="Janz R."/>
            <person name="Chapman E.R."/>
        </authorList>
    </citation>
    <scope>NOT A C.BOTULINUM NEUROTOXIN TYPE E RECEPTOR</scope>
</reference>
<reference key="7">
    <citation type="journal article" date="2009" name="Biochemistry">
        <title>Glycosylated SV2 and gangliosides as dual receptors for botulinum neurotoxin serotype F.</title>
        <authorList>
            <person name="Fu Z."/>
            <person name="Chen C."/>
            <person name="Barbieri J.T."/>
            <person name="Kim J.J."/>
            <person name="Baldwin M.R."/>
        </authorList>
    </citation>
    <scope>FUNCTION AS C.BOTULINUM NEUROTOXIN TYPE F RECEPTOR (MICROBIAL INFECTION)</scope>
    <scope>SUBUNIT (MICROBIAL INFECTION)</scope>
</reference>
<reference key="8">
    <citation type="journal article" date="2009" name="J. Neurochem.">
        <title>Botulinum neurotoxins C, E and F bind gangliosides via a conserved binding site prior to stimulation-dependent uptake with botulinum neurotoxin F utilising the three isoforms of SV2 as second receptor.</title>
        <authorList>
            <person name="Rummel A."/>
            <person name="Haefner K."/>
            <person name="Mahrhold S."/>
            <person name="Darashchonak N."/>
            <person name="Holt M."/>
            <person name="Jahn R."/>
            <person name="Beermann S."/>
            <person name="Karnath T."/>
            <person name="Bigalke H."/>
            <person name="Binz T."/>
        </authorList>
    </citation>
    <scope>FUNCTION AS C.BOTULINUM NEUROTOXIN TYPES A AND F RECEPTOR (MICROBIAL INFECTION)</scope>
    <scope>SUBUNIT (MICROBIAL INFECTION)</scope>
</reference>
<reference key="9">
    <citation type="journal article" date="2011" name="PLoS Pathog.">
        <title>Botulinum neurotoxin D uses synaptic vesicle protein SV2 and gangliosides as receptors.</title>
        <authorList>
            <person name="Peng L."/>
            <person name="Tepp W.H."/>
            <person name="Johnson E.A."/>
            <person name="Dong M."/>
        </authorList>
    </citation>
    <scope>POSSIBLE FUNCTION AS C.BOTULINUM NEUROTOXIN TYPE D RECEPTOR (MICROBIAL INFECTION)</scope>
    <scope>SUBUNIT (MICROBIAL INFECTION)</scope>
</reference>
<reference key="10">
    <citation type="journal article" date="2011" name="J. Biol. Chem.">
        <title>Novel ganglioside-mediated entry of botulinum neurotoxin serotype D into neurons.</title>
        <authorList>
            <person name="Kroken A.R."/>
            <person name="Karalewitz A.P."/>
            <person name="Fu Z."/>
            <person name="Kim J.J."/>
            <person name="Barbieri J.T."/>
        </authorList>
    </citation>
    <scope>NOT RECEPTOR FOR C.BOTULINUM NEUROTOXIN TYPE D (MICROBIAL INFECTION)</scope>
</reference>
<reference evidence="18" key="11">
    <citation type="journal article" date="2016" name="Nat. Struct. Mol. Biol.">
        <title>N-linked glycosylation of SV2 is required for binding and uptake of botulinum neurotoxin A.</title>
        <authorList>
            <person name="Yao G."/>
            <person name="Zhang S."/>
            <person name="Mahrhold S."/>
            <person name="Lam K.H."/>
            <person name="Stern D."/>
            <person name="Bagramyan K."/>
            <person name="Perry K."/>
            <person name="Kalkum M."/>
            <person name="Rummel A."/>
            <person name="Dong M."/>
            <person name="Jin R."/>
        </authorList>
    </citation>
    <scope>X-RAY CRYSTALLOGRAPHY (2.64 ANGSTROMS) OF 455-577</scope>
    <scope>FUNCTION AS C.BOTULINUM NEUROTOXIN TYPE A RECEPTOR (MICROBIAL INFECTION)</scope>
    <scope>SUBUNIT (MICROBIAL INFECTION)</scope>
    <scope>MUTAGENESIS OF ASN-559</scope>
    <scope>GLYCOSYLATION AT ASN-559</scope>
</reference>
<evidence type="ECO:0000250" key="1">
    <source>
        <dbReference type="UniProtKB" id="Q7L0J3"/>
    </source>
</evidence>
<evidence type="ECO:0000250" key="2">
    <source>
        <dbReference type="UniProtKB" id="Q9JIS5"/>
    </source>
</evidence>
<evidence type="ECO:0000255" key="3"/>
<evidence type="ECO:0000256" key="4">
    <source>
        <dbReference type="SAM" id="MobiDB-lite"/>
    </source>
</evidence>
<evidence type="ECO:0000269" key="5">
    <source>
    </source>
</evidence>
<evidence type="ECO:0000269" key="6">
    <source>
    </source>
</evidence>
<evidence type="ECO:0000269" key="7">
    <source>
    </source>
</evidence>
<evidence type="ECO:0000269" key="8">
    <source>
    </source>
</evidence>
<evidence type="ECO:0000269" key="9">
    <source>
    </source>
</evidence>
<evidence type="ECO:0000269" key="10">
    <source>
    </source>
</evidence>
<evidence type="ECO:0000269" key="11">
    <source>
    </source>
</evidence>
<evidence type="ECO:0000269" key="12">
    <source>
    </source>
</evidence>
<evidence type="ECO:0000269" key="13">
    <source>
    </source>
</evidence>
<evidence type="ECO:0000305" key="14"/>
<evidence type="ECO:0000305" key="15">
    <source>
    </source>
</evidence>
<evidence type="ECO:0000305" key="16">
    <source>
    </source>
</evidence>
<evidence type="ECO:0000305" key="17">
    <source>
    </source>
</evidence>
<evidence type="ECO:0007744" key="18">
    <source>
        <dbReference type="PDB" id="5JMC"/>
    </source>
</evidence>
<evidence type="ECO:0007829" key="19">
    <source>
        <dbReference type="PDB" id="5JMC"/>
    </source>
</evidence>
<sequence>MEDSYKDRTSLMKGAKDIAKEVKKQTVKKVNQAVDRAQDEYTQRSYSRFQDEDDDDDYYPPGETYSGEANDDEGSSEATEGHDEEDEIYEGEYQGIPSTNQGKDSIVSVGQPKGDEYKDRRELESERRADEEELAQQYELIIQECGHGRFQWALFFVLGMALMADGVEVFVVGFVLPSAETDLCIPNSGSGWLGSIVYLGMMVGAFFWGGLADKVGRKQSLLICMSVNGFFAFLSSFVQGYGFFLLCRLLSGFGIGGAIPTVFSYFAEVLAREKRGEHLSWLCMFWMIGGIYASAMAWAIIPHYGWSFSMGSAYQFHSWRVFVIVCALPCVSSVVALTFMPESPRFLLEVGKHDEAWMILKLIHDTNMRARGQPEKVFTVNKIKTPKQIDELIEIESDTGTWYRRCFVRIRTELYGIWLTFMRCFNYPVRENTIKLTIVWFTLSFGYYGLSVWFPDVIKHLQSDEYALLTRNVQKDKYANFSINFTMENQVHTGMEYDNGRFLGVKFKSVTFKDSVFKSCTFDDVTSVNTYFKNCTFIDTLFENTDFEPYKFIDSEFQNCSFLHNKTGCQITFDDDYSAYWIYFVNFLGTLAVLPGNIVSALLMDRIGRLTMLGGSMVLSGISCFFLWFGTSESMMIGMLCLYNGLTISAWNSLDVVTVELYPTDRRATGFGFLNALCKAAAVLGNLIFGSLVSITKAIPILLASTVLVCGGLVGLRLPDTRTQVLM</sequence>
<proteinExistence type="evidence at protein level"/>
<protein>
    <recommendedName>
        <fullName>Synaptic vesicle glycoprotein 2C</fullName>
        <shortName>Synaptic vesicle protein 2C</shortName>
    </recommendedName>
</protein>
<organism>
    <name type="scientific">Rattus norvegicus</name>
    <name type="common">Rat</name>
    <dbReference type="NCBI Taxonomy" id="10116"/>
    <lineage>
        <taxon>Eukaryota</taxon>
        <taxon>Metazoa</taxon>
        <taxon>Chordata</taxon>
        <taxon>Craniata</taxon>
        <taxon>Vertebrata</taxon>
        <taxon>Euteleostomi</taxon>
        <taxon>Mammalia</taxon>
        <taxon>Eutheria</taxon>
        <taxon>Euarchontoglires</taxon>
        <taxon>Glires</taxon>
        <taxon>Rodentia</taxon>
        <taxon>Myomorpha</taxon>
        <taxon>Muroidea</taxon>
        <taxon>Muridae</taxon>
        <taxon>Murinae</taxon>
        <taxon>Rattus</taxon>
    </lineage>
</organism>
<dbReference type="EMBL" id="AF060174">
    <property type="protein sequence ID" value="AAC78628.1"/>
    <property type="molecule type" value="mRNA"/>
</dbReference>
<dbReference type="RefSeq" id="NP_113781.1">
    <property type="nucleotide sequence ID" value="NM_031593.2"/>
</dbReference>
<dbReference type="RefSeq" id="XP_017446285.1">
    <property type="nucleotide sequence ID" value="XM_017590796.1"/>
</dbReference>
<dbReference type="PDB" id="5JMC">
    <property type="method" value="X-ray"/>
    <property type="resolution" value="2.64 A"/>
    <property type="chains" value="B/D/F/H=455-577"/>
</dbReference>
<dbReference type="PDBsum" id="5JMC"/>
<dbReference type="SMR" id="Q9Z2I6"/>
<dbReference type="FunCoup" id="Q9Z2I6">
    <property type="interactions" value="1224"/>
</dbReference>
<dbReference type="IntAct" id="Q9Z2I6">
    <property type="interactions" value="1"/>
</dbReference>
<dbReference type="MINT" id="Q9Z2I6"/>
<dbReference type="STRING" id="10116.ENSRNOP00000024459"/>
<dbReference type="GlyCosmos" id="Q9Z2I6">
    <property type="glycosylation" value="5 sites, No reported glycans"/>
</dbReference>
<dbReference type="GlyGen" id="Q9Z2I6">
    <property type="glycosylation" value="5 sites"/>
</dbReference>
<dbReference type="iPTMnet" id="Q9Z2I6"/>
<dbReference type="PhosphoSitePlus" id="Q9Z2I6"/>
<dbReference type="PaxDb" id="10116-ENSRNOP00000024459"/>
<dbReference type="Ensembl" id="ENSRNOT00000024459.7">
    <property type="protein sequence ID" value="ENSRNOP00000024459.3"/>
    <property type="gene ID" value="ENSRNOG00000018094.7"/>
</dbReference>
<dbReference type="GeneID" id="29643"/>
<dbReference type="KEGG" id="rno:29643"/>
<dbReference type="UCSC" id="RGD:619718">
    <property type="organism name" value="rat"/>
</dbReference>
<dbReference type="AGR" id="RGD:619718"/>
<dbReference type="CTD" id="22987"/>
<dbReference type="RGD" id="619718">
    <property type="gene designation" value="Sv2c"/>
</dbReference>
<dbReference type="eggNOG" id="KOG0255">
    <property type="taxonomic scope" value="Eukaryota"/>
</dbReference>
<dbReference type="GeneTree" id="ENSGT00950000182940"/>
<dbReference type="HOGENOM" id="CLU_001265_46_15_1"/>
<dbReference type="InParanoid" id="Q9Z2I6"/>
<dbReference type="OMA" id="HDEYKDR"/>
<dbReference type="OrthoDB" id="433512at2759"/>
<dbReference type="PhylomeDB" id="Q9Z2I6"/>
<dbReference type="TreeFam" id="TF324824"/>
<dbReference type="PRO" id="PR:Q9Z2I6"/>
<dbReference type="Proteomes" id="UP000002494">
    <property type="component" value="Chromosome 2"/>
</dbReference>
<dbReference type="Bgee" id="ENSRNOG00000018094">
    <property type="expression patterns" value="Expressed in cerebellum and 9 other cell types or tissues"/>
</dbReference>
<dbReference type="GO" id="GO:0098691">
    <property type="term" value="C:dopaminergic synapse"/>
    <property type="evidence" value="ECO:0000266"/>
    <property type="project" value="RGD"/>
</dbReference>
<dbReference type="GO" id="GO:0008021">
    <property type="term" value="C:synaptic vesicle"/>
    <property type="evidence" value="ECO:0000314"/>
    <property type="project" value="RGD"/>
</dbReference>
<dbReference type="GO" id="GO:0030672">
    <property type="term" value="C:synaptic vesicle membrane"/>
    <property type="evidence" value="ECO:0000314"/>
    <property type="project" value="SynGO"/>
</dbReference>
<dbReference type="GO" id="GO:0022857">
    <property type="term" value="F:transmembrane transporter activity"/>
    <property type="evidence" value="ECO:0007669"/>
    <property type="project" value="InterPro"/>
</dbReference>
<dbReference type="GO" id="GO:0007268">
    <property type="term" value="P:chemical synaptic transmission"/>
    <property type="evidence" value="ECO:0007669"/>
    <property type="project" value="InterPro"/>
</dbReference>
<dbReference type="GO" id="GO:0006836">
    <property type="term" value="P:neurotransmitter transport"/>
    <property type="evidence" value="ECO:0007669"/>
    <property type="project" value="UniProtKB-KW"/>
</dbReference>
<dbReference type="GO" id="GO:2000300">
    <property type="term" value="P:regulation of synaptic vesicle exocytosis"/>
    <property type="evidence" value="ECO:0000266"/>
    <property type="project" value="RGD"/>
</dbReference>
<dbReference type="CDD" id="cd17440">
    <property type="entry name" value="MFS_SV2C"/>
    <property type="match status" value="1"/>
</dbReference>
<dbReference type="FunFam" id="1.20.1250.20:FF:000009">
    <property type="entry name" value="Synaptic vesicle glycoprotein 2A"/>
    <property type="match status" value="1"/>
</dbReference>
<dbReference type="FunFam" id="1.20.1250.20:FF:000721">
    <property type="entry name" value="Synaptic vesicle glycoprotein 2C"/>
    <property type="match status" value="1"/>
</dbReference>
<dbReference type="FunFam" id="2.160.20.80:FF:000010">
    <property type="entry name" value="Synaptic vesicle glycoprotein 2C"/>
    <property type="match status" value="1"/>
</dbReference>
<dbReference type="Gene3D" id="2.160.20.80">
    <property type="entry name" value="E3 ubiquitin-protein ligase SopA"/>
    <property type="match status" value="1"/>
</dbReference>
<dbReference type="Gene3D" id="1.20.1250.20">
    <property type="entry name" value="MFS general substrate transporter like domains"/>
    <property type="match status" value="2"/>
</dbReference>
<dbReference type="InterPro" id="IPR055415">
    <property type="entry name" value="LD_SV2"/>
</dbReference>
<dbReference type="InterPro" id="IPR011701">
    <property type="entry name" value="MFS"/>
</dbReference>
<dbReference type="InterPro" id="IPR020846">
    <property type="entry name" value="MFS_dom"/>
</dbReference>
<dbReference type="InterPro" id="IPR005828">
    <property type="entry name" value="MFS_sugar_transport-like"/>
</dbReference>
<dbReference type="InterPro" id="IPR036259">
    <property type="entry name" value="MFS_trans_sf"/>
</dbReference>
<dbReference type="InterPro" id="IPR005829">
    <property type="entry name" value="Sugar_transporter_CS"/>
</dbReference>
<dbReference type="InterPro" id="IPR022308">
    <property type="entry name" value="SV2"/>
</dbReference>
<dbReference type="NCBIfam" id="TIGR01299">
    <property type="entry name" value="synapt_SV2"/>
    <property type="match status" value="1"/>
</dbReference>
<dbReference type="PANTHER" id="PTHR23511">
    <property type="entry name" value="SYNAPTIC VESICLE GLYCOPROTEIN 2"/>
    <property type="match status" value="1"/>
</dbReference>
<dbReference type="PANTHER" id="PTHR23511:SF6">
    <property type="entry name" value="SYNAPTIC VESICLE GLYCOPROTEIN 2C"/>
    <property type="match status" value="1"/>
</dbReference>
<dbReference type="Pfam" id="PF23894">
    <property type="entry name" value="LD_SV2"/>
    <property type="match status" value="1"/>
</dbReference>
<dbReference type="Pfam" id="PF07690">
    <property type="entry name" value="MFS_1"/>
    <property type="match status" value="1"/>
</dbReference>
<dbReference type="Pfam" id="PF00083">
    <property type="entry name" value="Sugar_tr"/>
    <property type="match status" value="1"/>
</dbReference>
<dbReference type="SUPFAM" id="SSF103473">
    <property type="entry name" value="MFS general substrate transporter"/>
    <property type="match status" value="2"/>
</dbReference>
<dbReference type="SUPFAM" id="SSF141571">
    <property type="entry name" value="Pentapeptide repeat-like"/>
    <property type="match status" value="1"/>
</dbReference>
<dbReference type="PROSITE" id="PS50850">
    <property type="entry name" value="MFS"/>
    <property type="match status" value="1"/>
</dbReference>